<proteinExistence type="inferred from homology"/>
<accession>Q2JFH3</accession>
<name>RL2_FRACC</name>
<dbReference type="EMBL" id="CP000249">
    <property type="protein sequence ID" value="ABD09969.1"/>
    <property type="molecule type" value="Genomic_DNA"/>
</dbReference>
<dbReference type="RefSeq" id="WP_011435042.1">
    <property type="nucleotide sequence ID" value="NZ_JENI01000032.1"/>
</dbReference>
<dbReference type="SMR" id="Q2JFH3"/>
<dbReference type="STRING" id="106370.Francci3_0585"/>
<dbReference type="KEGG" id="fra:Francci3_0585"/>
<dbReference type="eggNOG" id="COG0090">
    <property type="taxonomic scope" value="Bacteria"/>
</dbReference>
<dbReference type="HOGENOM" id="CLU_036235_2_1_11"/>
<dbReference type="OrthoDB" id="9778722at2"/>
<dbReference type="PhylomeDB" id="Q2JFH3"/>
<dbReference type="Proteomes" id="UP000001937">
    <property type="component" value="Chromosome"/>
</dbReference>
<dbReference type="GO" id="GO:0015934">
    <property type="term" value="C:large ribosomal subunit"/>
    <property type="evidence" value="ECO:0007669"/>
    <property type="project" value="InterPro"/>
</dbReference>
<dbReference type="GO" id="GO:0019843">
    <property type="term" value="F:rRNA binding"/>
    <property type="evidence" value="ECO:0007669"/>
    <property type="project" value="UniProtKB-UniRule"/>
</dbReference>
<dbReference type="GO" id="GO:0003735">
    <property type="term" value="F:structural constituent of ribosome"/>
    <property type="evidence" value="ECO:0007669"/>
    <property type="project" value="InterPro"/>
</dbReference>
<dbReference type="GO" id="GO:0016740">
    <property type="term" value="F:transferase activity"/>
    <property type="evidence" value="ECO:0007669"/>
    <property type="project" value="InterPro"/>
</dbReference>
<dbReference type="GO" id="GO:0002181">
    <property type="term" value="P:cytoplasmic translation"/>
    <property type="evidence" value="ECO:0007669"/>
    <property type="project" value="TreeGrafter"/>
</dbReference>
<dbReference type="FunFam" id="2.30.30.30:FF:000001">
    <property type="entry name" value="50S ribosomal protein L2"/>
    <property type="match status" value="1"/>
</dbReference>
<dbReference type="FunFam" id="2.40.50.140:FF:000003">
    <property type="entry name" value="50S ribosomal protein L2"/>
    <property type="match status" value="1"/>
</dbReference>
<dbReference type="FunFam" id="4.10.950.10:FF:000001">
    <property type="entry name" value="50S ribosomal protein L2"/>
    <property type="match status" value="1"/>
</dbReference>
<dbReference type="Gene3D" id="2.30.30.30">
    <property type="match status" value="1"/>
</dbReference>
<dbReference type="Gene3D" id="2.40.50.140">
    <property type="entry name" value="Nucleic acid-binding proteins"/>
    <property type="match status" value="1"/>
</dbReference>
<dbReference type="Gene3D" id="4.10.950.10">
    <property type="entry name" value="Ribosomal protein L2, domain 3"/>
    <property type="match status" value="1"/>
</dbReference>
<dbReference type="HAMAP" id="MF_01320_B">
    <property type="entry name" value="Ribosomal_uL2_B"/>
    <property type="match status" value="1"/>
</dbReference>
<dbReference type="InterPro" id="IPR012340">
    <property type="entry name" value="NA-bd_OB-fold"/>
</dbReference>
<dbReference type="InterPro" id="IPR014722">
    <property type="entry name" value="Rib_uL2_dom2"/>
</dbReference>
<dbReference type="InterPro" id="IPR002171">
    <property type="entry name" value="Ribosomal_uL2"/>
</dbReference>
<dbReference type="InterPro" id="IPR005880">
    <property type="entry name" value="Ribosomal_uL2_bac/org-type"/>
</dbReference>
<dbReference type="InterPro" id="IPR022669">
    <property type="entry name" value="Ribosomal_uL2_C"/>
</dbReference>
<dbReference type="InterPro" id="IPR022671">
    <property type="entry name" value="Ribosomal_uL2_CS"/>
</dbReference>
<dbReference type="InterPro" id="IPR014726">
    <property type="entry name" value="Ribosomal_uL2_dom3"/>
</dbReference>
<dbReference type="InterPro" id="IPR022666">
    <property type="entry name" value="Ribosomal_uL2_RNA-bd_dom"/>
</dbReference>
<dbReference type="InterPro" id="IPR008991">
    <property type="entry name" value="Translation_prot_SH3-like_sf"/>
</dbReference>
<dbReference type="NCBIfam" id="TIGR01171">
    <property type="entry name" value="rplB_bact"/>
    <property type="match status" value="1"/>
</dbReference>
<dbReference type="PANTHER" id="PTHR13691:SF5">
    <property type="entry name" value="LARGE RIBOSOMAL SUBUNIT PROTEIN UL2M"/>
    <property type="match status" value="1"/>
</dbReference>
<dbReference type="PANTHER" id="PTHR13691">
    <property type="entry name" value="RIBOSOMAL PROTEIN L2"/>
    <property type="match status" value="1"/>
</dbReference>
<dbReference type="Pfam" id="PF00181">
    <property type="entry name" value="Ribosomal_L2"/>
    <property type="match status" value="1"/>
</dbReference>
<dbReference type="Pfam" id="PF03947">
    <property type="entry name" value="Ribosomal_L2_C"/>
    <property type="match status" value="1"/>
</dbReference>
<dbReference type="PIRSF" id="PIRSF002158">
    <property type="entry name" value="Ribosomal_L2"/>
    <property type="match status" value="1"/>
</dbReference>
<dbReference type="SMART" id="SM01383">
    <property type="entry name" value="Ribosomal_L2"/>
    <property type="match status" value="1"/>
</dbReference>
<dbReference type="SMART" id="SM01382">
    <property type="entry name" value="Ribosomal_L2_C"/>
    <property type="match status" value="1"/>
</dbReference>
<dbReference type="SUPFAM" id="SSF50249">
    <property type="entry name" value="Nucleic acid-binding proteins"/>
    <property type="match status" value="1"/>
</dbReference>
<dbReference type="SUPFAM" id="SSF50104">
    <property type="entry name" value="Translation proteins SH3-like domain"/>
    <property type="match status" value="1"/>
</dbReference>
<dbReference type="PROSITE" id="PS00467">
    <property type="entry name" value="RIBOSOMAL_L2"/>
    <property type="match status" value="1"/>
</dbReference>
<feature type="chain" id="PRO_0000237188" description="Large ribosomal subunit protein uL2">
    <location>
        <begin position="1"/>
        <end position="277"/>
    </location>
</feature>
<feature type="region of interest" description="Disordered" evidence="2">
    <location>
        <begin position="35"/>
        <end position="57"/>
    </location>
</feature>
<feature type="region of interest" description="Disordered" evidence="2">
    <location>
        <begin position="222"/>
        <end position="277"/>
    </location>
</feature>
<feature type="compositionally biased region" description="Basic residues" evidence="2">
    <location>
        <begin position="37"/>
        <end position="57"/>
    </location>
</feature>
<feature type="compositionally biased region" description="Basic residues" evidence="2">
    <location>
        <begin position="268"/>
        <end position="277"/>
    </location>
</feature>
<comment type="function">
    <text evidence="1">One of the primary rRNA binding proteins. Required for association of the 30S and 50S subunits to form the 70S ribosome, for tRNA binding and peptide bond formation. It has been suggested to have peptidyltransferase activity; this is somewhat controversial. Makes several contacts with the 16S rRNA in the 70S ribosome.</text>
</comment>
<comment type="subunit">
    <text evidence="1">Part of the 50S ribosomal subunit. Forms a bridge to the 30S subunit in the 70S ribosome.</text>
</comment>
<comment type="similarity">
    <text evidence="1">Belongs to the universal ribosomal protein uL2 family.</text>
</comment>
<reference key="1">
    <citation type="journal article" date="2007" name="Genome Res.">
        <title>Genome characteristics of facultatively symbiotic Frankia sp. strains reflect host range and host plant biogeography.</title>
        <authorList>
            <person name="Normand P."/>
            <person name="Lapierre P."/>
            <person name="Tisa L.S."/>
            <person name="Gogarten J.P."/>
            <person name="Alloisio N."/>
            <person name="Bagnarol E."/>
            <person name="Bassi C.A."/>
            <person name="Berry A.M."/>
            <person name="Bickhart D.M."/>
            <person name="Choisne N."/>
            <person name="Couloux A."/>
            <person name="Cournoyer B."/>
            <person name="Cruveiller S."/>
            <person name="Daubin V."/>
            <person name="Demange N."/>
            <person name="Francino M.P."/>
            <person name="Goltsman E."/>
            <person name="Huang Y."/>
            <person name="Kopp O.R."/>
            <person name="Labarre L."/>
            <person name="Lapidus A."/>
            <person name="Lavire C."/>
            <person name="Marechal J."/>
            <person name="Martinez M."/>
            <person name="Mastronunzio J.E."/>
            <person name="Mullin B.C."/>
            <person name="Niemann J."/>
            <person name="Pujic P."/>
            <person name="Rawnsley T."/>
            <person name="Rouy Z."/>
            <person name="Schenowitz C."/>
            <person name="Sellstedt A."/>
            <person name="Tavares F."/>
            <person name="Tomkins J.P."/>
            <person name="Vallenet D."/>
            <person name="Valverde C."/>
            <person name="Wall L.G."/>
            <person name="Wang Y."/>
            <person name="Medigue C."/>
            <person name="Benson D.R."/>
        </authorList>
    </citation>
    <scope>NUCLEOTIDE SEQUENCE [LARGE SCALE GENOMIC DNA]</scope>
    <source>
        <strain>DSM 45818 / CECT 9043 / HFP020203 / CcI3</strain>
    </source>
</reference>
<gene>
    <name evidence="1" type="primary">rplB</name>
    <name type="ordered locus">Francci3_0585</name>
</gene>
<protein>
    <recommendedName>
        <fullName evidence="1">Large ribosomal subunit protein uL2</fullName>
    </recommendedName>
    <alternativeName>
        <fullName evidence="3">50S ribosomal protein L2</fullName>
    </alternativeName>
</protein>
<evidence type="ECO:0000255" key="1">
    <source>
        <dbReference type="HAMAP-Rule" id="MF_01320"/>
    </source>
</evidence>
<evidence type="ECO:0000256" key="2">
    <source>
        <dbReference type="SAM" id="MobiDB-lite"/>
    </source>
</evidence>
<evidence type="ECO:0000305" key="3"/>
<sequence length="277" mass="30398">MGIRRYKPTTPGRRGASVADFVEITRDHPEKSLVRPLHSKGGRNVHGRITTRHQGGGHKRAYRVIDFRRDKDGVPAKVAHIEYDPNRTARIALLHYLDGEKRYILAPVKLRQGDTVSSGVGADIKPGNALPLRNIPTGTVVHAIELRPGGGAKIARSAGTSVQLVAKDGPYAQLRMPSGEIRNVDVRCRATVGEVGNAEQSNINWGKAGRMRWKGRRPTVRGVAMNPVDHPHGGGEGKTSGGRHPVNPKGRPEGRTRATRKSSDALIVRRRKQNRRR</sequence>
<keyword id="KW-1185">Reference proteome</keyword>
<keyword id="KW-0687">Ribonucleoprotein</keyword>
<keyword id="KW-0689">Ribosomal protein</keyword>
<keyword id="KW-0694">RNA-binding</keyword>
<keyword id="KW-0699">rRNA-binding</keyword>
<organism>
    <name type="scientific">Frankia casuarinae (strain DSM 45818 / CECT 9043 / HFP020203 / CcI3)</name>
    <dbReference type="NCBI Taxonomy" id="106370"/>
    <lineage>
        <taxon>Bacteria</taxon>
        <taxon>Bacillati</taxon>
        <taxon>Actinomycetota</taxon>
        <taxon>Actinomycetes</taxon>
        <taxon>Frankiales</taxon>
        <taxon>Frankiaceae</taxon>
        <taxon>Frankia</taxon>
    </lineage>
</organism>